<accession>W2MBG9</accession>
<gene>
    <name evidence="3" type="primary">RxLR2</name>
    <name type="ORF">L914_19142</name>
</gene>
<protein>
    <recommendedName>
        <fullName evidence="3">Secreted RxLR effector protein 2</fullName>
    </recommendedName>
</protein>
<organism>
    <name type="scientific">Phytophthora nicotianae</name>
    <name type="common">Potato buckeye rot agent</name>
    <name type="synonym">Phytophthora parasitica</name>
    <dbReference type="NCBI Taxonomy" id="4792"/>
    <lineage>
        <taxon>Eukaryota</taxon>
        <taxon>Sar</taxon>
        <taxon>Stramenopiles</taxon>
        <taxon>Oomycota</taxon>
        <taxon>Peronosporales</taxon>
        <taxon>Peronosporaceae</taxon>
        <taxon>Phytophthora</taxon>
    </lineage>
</organism>
<name>RXLR2_PHYNI</name>
<sequence>MRLLLWVLLVTLVTFLSSGDAAPVDSNKQLERAAINKVTSRNLANDNSLKHEKRFLRGDRSNIVNLKDGDENEERKIGQKMTTALKSIKVWYLKWEQKILLPGFKKMAKKEMTYSKLMDRFRVRMMNSGRWGTPSGFKRYGRLYKDYLISINRADLTV</sequence>
<proteinExistence type="evidence at transcript level"/>
<dbReference type="EMBL" id="KI695989">
    <property type="protein sequence ID" value="ETM33645.1"/>
    <property type="molecule type" value="Genomic_DNA"/>
</dbReference>
<dbReference type="EnsemblProtists" id="ETM33645">
    <property type="protein sequence ID" value="ETM33645"/>
    <property type="gene ID" value="L914_19142"/>
</dbReference>
<dbReference type="VEuPathDB" id="FungiDB:PPTG_17847"/>
<dbReference type="Proteomes" id="UP000054532">
    <property type="component" value="Unassembled WGS sequence"/>
</dbReference>
<dbReference type="GO" id="GO:0005576">
    <property type="term" value="C:extracellular region"/>
    <property type="evidence" value="ECO:0007669"/>
    <property type="project" value="UniProtKB-SubCell"/>
</dbReference>
<dbReference type="GO" id="GO:0043657">
    <property type="term" value="C:host cell"/>
    <property type="evidence" value="ECO:0007669"/>
    <property type="project" value="UniProtKB-SubCell"/>
</dbReference>
<dbReference type="InterPro" id="IPR031825">
    <property type="entry name" value="RXLR"/>
</dbReference>
<dbReference type="Pfam" id="PF16810">
    <property type="entry name" value="RXLR"/>
    <property type="match status" value="1"/>
</dbReference>
<feature type="signal peptide" evidence="1">
    <location>
        <begin position="1"/>
        <end position="21"/>
    </location>
</feature>
<feature type="chain" id="PRO_5004819863" description="Secreted RxLR effector protein 2">
    <location>
        <begin position="22"/>
        <end position="158"/>
    </location>
</feature>
<feature type="short sequence motif" description="RxLR-dEER" evidence="5">
    <location>
        <begin position="54"/>
        <end position="75"/>
    </location>
</feature>
<evidence type="ECO:0000255" key="1"/>
<evidence type="ECO:0000269" key="2">
    <source>
    </source>
</evidence>
<evidence type="ECO:0000303" key="3">
    <source>
    </source>
</evidence>
<evidence type="ECO:0000305" key="4"/>
<evidence type="ECO:0000305" key="5">
    <source>
    </source>
</evidence>
<comment type="function">
    <text evidence="2">Secreted effector that completely suppresses elicitor-induced cell death in host and enhances virulence of P.parasitica.</text>
</comment>
<comment type="subcellular location">
    <subcellularLocation>
        <location evidence="5">Secreted</location>
    </subcellularLocation>
    <subcellularLocation>
        <location evidence="5">Host cell</location>
    </subcellularLocation>
</comment>
<comment type="induction">
    <text evidence="2">Expression is induced in presence of citrus root extracts or during the interaction with the susceptible host.</text>
</comment>
<comment type="domain">
    <text evidence="5">The RxLR-dEER motif acts to carry the protein into the host cell cytoplasm through binding to cell surface phosphatidylinositol-3-phosphate.</text>
</comment>
<comment type="similarity">
    <text evidence="4">Belongs to the RxLR effector family.</text>
</comment>
<keyword id="KW-0964">Secreted</keyword>
<keyword id="KW-0732">Signal</keyword>
<keyword id="KW-0843">Virulence</keyword>
<reference key="1">
    <citation type="submission" date="2013-11" db="EMBL/GenBank/DDBJ databases">
        <title>The genome sequence of Phytophthora parasitica IAC_01/95.</title>
        <authorList>
            <consortium name="The Broad Institute Genomics Platform"/>
            <person name="Russ C."/>
            <person name="Tyler B."/>
            <person name="Panabieres F."/>
            <person name="Shan W."/>
            <person name="Tripathy S."/>
            <person name="Grunwald N."/>
            <person name="Machado M."/>
            <person name="Johnson C.S."/>
            <person name="Arredondo F."/>
            <person name="Hong C."/>
            <person name="Coffey M."/>
            <person name="Young S.K."/>
            <person name="Zeng Q."/>
            <person name="Gargeya S."/>
            <person name="Fitzgerald M."/>
            <person name="Abouelleil A."/>
            <person name="Alvarado L."/>
            <person name="Chapman S.B."/>
            <person name="Gainer-Dewar J."/>
            <person name="Goldberg J."/>
            <person name="Griggs A."/>
            <person name="Gujja S."/>
            <person name="Hansen M."/>
            <person name="Howarth C."/>
            <person name="Imamovic A."/>
            <person name="Ireland A."/>
            <person name="Larimer J."/>
            <person name="McCowan C."/>
            <person name="Murphy C."/>
            <person name="Pearson M."/>
            <person name="Poon T.W."/>
            <person name="Priest M."/>
            <person name="Roberts A."/>
            <person name="Saif S."/>
            <person name="Shea T."/>
            <person name="Sykes S."/>
            <person name="Wortman J."/>
            <person name="Nusbaum C."/>
            <person name="Birren B."/>
        </authorList>
    </citation>
    <scope>NUCLEOTIDE SEQUENCE [LARGE SCALE GENOMIC DNA]</scope>
    <source>
        <strain>IAC_01/95</strain>
    </source>
</reference>
<reference key="2">
    <citation type="journal article" date="2018" name="Mol. Plant Microbe Interact.">
        <title>Phytophthora parasitica effector PpRxLR2 suppresses Nicotiana benthamiana immunity.</title>
        <authorList>
            <person name="Dalio R.J.D."/>
            <person name="Maximo H.J."/>
            <person name="Oliveira T.S."/>
            <person name="Dias R.O."/>
            <person name="Breton M.C."/>
            <person name="Felizatti H."/>
            <person name="Machado M."/>
        </authorList>
    </citation>
    <scope>INDUCTION</scope>
    <scope>FUNCTION</scope>
</reference>